<name>VG26_BPMD2</name>
<organism>
    <name type="scientific">Mycobacterium phage D29</name>
    <name type="common">Mycobacteriophage D29</name>
    <dbReference type="NCBI Taxonomy" id="28369"/>
    <lineage>
        <taxon>Viruses</taxon>
        <taxon>Duplodnaviria</taxon>
        <taxon>Heunggongvirae</taxon>
        <taxon>Uroviricota</taxon>
        <taxon>Caudoviricetes</taxon>
        <taxon>Fromanvirus</taxon>
    </lineage>
</organism>
<reference key="1">
    <citation type="journal article" date="1998" name="J. Mol. Biol.">
        <title>Genome structure of mycobacteriophage D29: implications for phage evolution.</title>
        <authorList>
            <person name="Ford M.E."/>
            <person name="Sarkis G.J."/>
            <person name="Belanger A.E."/>
            <person name="Hendrix R.W."/>
            <person name="Hatfull G.F."/>
        </authorList>
    </citation>
    <scope>NUCLEOTIDE SEQUENCE [LARGE SCALE GENOMIC DNA]</scope>
</reference>
<protein>
    <recommendedName>
        <fullName>Minor tail protein Gp26</fullName>
    </recommendedName>
</protein>
<organismHost>
    <name type="scientific">Mycobacterium</name>
    <dbReference type="NCBI Taxonomy" id="1763"/>
</organismHost>
<accession>O64220</accession>
<proteinExistence type="inferred from homology"/>
<evidence type="ECO:0000250" key="1"/>
<dbReference type="EMBL" id="AF022214">
    <property type="protein sequence ID" value="AAC18467.1"/>
    <property type="molecule type" value="Genomic_DNA"/>
</dbReference>
<dbReference type="PIR" id="H72802">
    <property type="entry name" value="H72802"/>
</dbReference>
<dbReference type="RefSeq" id="NP_046842.1">
    <property type="nucleotide sequence ID" value="NC_001900.1"/>
</dbReference>
<dbReference type="SMR" id="O64220"/>
<dbReference type="GeneID" id="1261568"/>
<dbReference type="KEGG" id="vg:1261568"/>
<dbReference type="OrthoDB" id="540at10239"/>
<dbReference type="Proteomes" id="UP000002131">
    <property type="component" value="Segment"/>
</dbReference>
<dbReference type="Gene3D" id="1.25.10.10">
    <property type="entry name" value="Leucine-rich Repeat Variant"/>
    <property type="match status" value="1"/>
</dbReference>
<dbReference type="InterPro" id="IPR011989">
    <property type="entry name" value="ARM-like"/>
</dbReference>
<dbReference type="InterPro" id="IPR016024">
    <property type="entry name" value="ARM-type_fold"/>
</dbReference>
<dbReference type="PANTHER" id="PTHR37813">
    <property type="entry name" value="FELS-2 PROPHAGE PROTEIN"/>
    <property type="match status" value="1"/>
</dbReference>
<dbReference type="PANTHER" id="PTHR37813:SF1">
    <property type="entry name" value="FELS-2 PROPHAGE PROTEIN"/>
    <property type="match status" value="1"/>
</dbReference>
<dbReference type="SUPFAM" id="SSF48371">
    <property type="entry name" value="ARM repeat"/>
    <property type="match status" value="1"/>
</dbReference>
<feature type="initiator methionine" description="Removed; by host" evidence="1">
    <location>
        <position position="1"/>
    </location>
</feature>
<feature type="chain" id="PRO_0000164740" description="Minor tail protein Gp26">
    <location>
        <begin position="2"/>
        <end position="837"/>
    </location>
</feature>
<sequence>MPNSAGVEVARISVKVSPNTKEFRRELKTDLEKIERELSADVPVNADLNAAQAKADFKRLMMQLKTEAARGVNIPVDVNVDKDTKGGFLSRLLGGKKGLSSLGDDAAKASSQVQHLGKSFLDLTRTAWIGVGIVAIAAPLVGLVAGLLAGLPSLLSAFGAGAGVVALGMDGIKAAAETMMPALEAAKTAVSSTFQTGLTPVFQQLGGLLTTLTPNLQNVATGIVNIAKGFTDVVSQGPGLQQLQNILDRTGEFFTGLGPVISTGTQAFLTLSNAGANAFGHLLAPLQEFANGFNDMVNRVTSNGVFDGAMQGLSQTLGSILNLFNRLMESGLQAMGQLGGPLSTLVNGIGDLFIALMPALTSVSSLLGNVLGTLGTQLAPIITALTPAFTTLADTLGTMLTGALQALGPVLTVVAETLGTALTTALQAIQPMLPTLVDSFKQLSETLVTSLGPYLPQIGEAFGQIVGAVIQLAPTIISSLIPAFQTLIPAIAQLAPSLVQIVQAFTKLMPVIVPVVQIVINLAAAVVQAGASIASFLIGGISRLVGVLADCVGAVAEWVGSWSSGVQQVSDFVGQLPGKIKSWFDDAGSWLIEAGKNVVQGLINGIGSMISSAVSKAKELASSVKNAVTGFLGIHSPSRVFAEIGQFTAEGFGNGFEEGFQPVIEKAKALAAELSQAMESGVDPSGILAGISTKELKQYSAALEQERKRIQVEKNAIPKEDKAGRAALQAQLDQIKAQKDILAYQRDRIKNEEDYVGAAGDDPLVKAASGLMNAPVDFAKATGKQFLTDLGISGDGAISKAITEGIQYIFQIGSVDEALSIKDREESKNALSVVGRA</sequence>
<keyword id="KW-1185">Reference proteome</keyword>
<gene>
    <name type="primary">26</name>
</gene>